<dbReference type="EMBL" id="AE000790">
    <property type="protein sequence ID" value="AAC66227.1"/>
    <property type="molecule type" value="Genomic_DNA"/>
</dbReference>
<dbReference type="EMBL" id="L31423">
    <property type="protein sequence ID" value="AAA64900.1"/>
    <property type="status" value="ALT_INIT"/>
    <property type="molecule type" value="Genomic_DNA"/>
</dbReference>
<dbReference type="PIR" id="C70207">
    <property type="entry name" value="C70207"/>
</dbReference>
<dbReference type="RefSeq" id="NP_045676.1">
    <property type="nucleotide sequence ID" value="NC_001857.2"/>
</dbReference>
<dbReference type="RefSeq" id="WP_010258570.1">
    <property type="nucleotide sequence ID" value="NC_001857.2"/>
</dbReference>
<dbReference type="PDB" id="6QS0">
    <property type="method" value="NMR"/>
    <property type="chains" value="A=52-169"/>
</dbReference>
<dbReference type="PDBsum" id="6QS0"/>
<dbReference type="BMRB" id="Q44849"/>
<dbReference type="SMR" id="Q44849"/>
<dbReference type="EnsemblBacteria" id="AAC66227">
    <property type="protein sequence ID" value="AAC66227"/>
    <property type="gene ID" value="BB_A03"/>
</dbReference>
<dbReference type="KEGG" id="bbu:BB_A03"/>
<dbReference type="PATRIC" id="fig|224326.49.peg.1520"/>
<dbReference type="HOGENOM" id="CLU_1575467_0_0_12"/>
<dbReference type="OrthoDB" id="352217at2"/>
<dbReference type="Proteomes" id="UP000001807">
    <property type="component" value="Plasmid lp54"/>
</dbReference>
<dbReference type="GO" id="GO:0009279">
    <property type="term" value="C:cell outer membrane"/>
    <property type="evidence" value="ECO:0007669"/>
    <property type="project" value="UniProtKB-SubCell"/>
</dbReference>
<dbReference type="GO" id="GO:0016020">
    <property type="term" value="C:membrane"/>
    <property type="evidence" value="ECO:0000314"/>
    <property type="project" value="CAFA"/>
</dbReference>
<protein>
    <recommendedName>
        <fullName>Putative outer membrane protein BBA03</fullName>
    </recommendedName>
</protein>
<reference key="1">
    <citation type="journal article" date="1997" name="Nature">
        <title>Genomic sequence of a Lyme disease spirochaete, Borrelia burgdorferi.</title>
        <authorList>
            <person name="Fraser C.M."/>
            <person name="Casjens S."/>
            <person name="Huang W.M."/>
            <person name="Sutton G.G."/>
            <person name="Clayton R.A."/>
            <person name="Lathigra R."/>
            <person name="White O."/>
            <person name="Ketchum K.A."/>
            <person name="Dodson R.J."/>
            <person name="Hickey E.K."/>
            <person name="Gwinn M.L."/>
            <person name="Dougherty B.A."/>
            <person name="Tomb J.-F."/>
            <person name="Fleischmann R.D."/>
            <person name="Richardson D.L."/>
            <person name="Peterson J.D."/>
            <person name="Kerlavage A.R."/>
            <person name="Quackenbush J."/>
            <person name="Salzberg S.L."/>
            <person name="Hanson M."/>
            <person name="van Vugt R."/>
            <person name="Palmer N."/>
            <person name="Adams M.D."/>
            <person name="Gocayne J.D."/>
            <person name="Weidman J.F."/>
            <person name="Utterback T.R."/>
            <person name="Watthey L."/>
            <person name="McDonald L.A."/>
            <person name="Artiach P."/>
            <person name="Bowman C."/>
            <person name="Garland S.A."/>
            <person name="Fujii C."/>
            <person name="Cotton M.D."/>
            <person name="Horst K."/>
            <person name="Roberts K.M."/>
            <person name="Hatch B."/>
            <person name="Smith H.O."/>
            <person name="Venter J.C."/>
        </authorList>
    </citation>
    <scope>NUCLEOTIDE SEQUENCE [LARGE SCALE GENOMIC DNA]</scope>
    <source>
        <strain>ATCC 35210 / DSM 4680 / CIP 102532 / B31</strain>
    </source>
</reference>
<reference key="2">
    <citation type="submission" date="1994-08" db="EMBL/GenBank/DDBJ databases">
        <authorList>
            <person name="Akins D.R."/>
            <person name="Popova T."/>
            <person name="Brusca J."/>
            <person name="Goldberg M.L."/>
            <person name="Li M."/>
            <person name="Baker S.C."/>
            <person name="Norgard M.V."/>
            <person name="Radolf J.D."/>
        </authorList>
    </citation>
    <scope>NUCLEOTIDE SEQUENCE [GENOMIC DNA] OF 1-84</scope>
    <source>
        <strain>ATCC 53899 / 297</strain>
    </source>
</reference>
<accession>Q44849</accession>
<sequence length="169" mass="19222">MKKTIIVFIILAFMLNCKNKSNDAEPNNDLDEKSQAKSNLVDEDRIEFSKATPLEKLVSRLNLNNTEKETLTFLTNLLKEKLVDPNIGLHFKNSGGDESKIEESVQKFLSELKEDEIKDLLAKIKENKDKKEKDPEELNTYKSILASGFDGIFNQADSKTTLNKLKDTI</sequence>
<organism>
    <name type="scientific">Borreliella burgdorferi (strain ATCC 35210 / DSM 4680 / CIP 102532 / B31)</name>
    <name type="common">Borrelia burgdorferi</name>
    <dbReference type="NCBI Taxonomy" id="224326"/>
    <lineage>
        <taxon>Bacteria</taxon>
        <taxon>Pseudomonadati</taxon>
        <taxon>Spirochaetota</taxon>
        <taxon>Spirochaetia</taxon>
        <taxon>Spirochaetales</taxon>
        <taxon>Borreliaceae</taxon>
        <taxon>Borreliella</taxon>
    </lineage>
</organism>
<proteinExistence type="evidence at protein level"/>
<comment type="subcellular location">
    <subcellularLocation>
        <location evidence="1">Cell outer membrane</location>
        <topology evidence="1">Peripheral membrane protein</topology>
    </subcellularLocation>
</comment>
<comment type="sequence caution" evidence="1">
    <conflict type="erroneous initiation">
        <sequence resource="EMBL-CDS" id="AAA64900"/>
    </conflict>
</comment>
<feature type="chain" id="PRO_0000174421" description="Putative outer membrane protein BBA03">
    <location>
        <begin position="1"/>
        <end position="169"/>
    </location>
</feature>
<feature type="helix" evidence="2">
    <location>
        <begin position="54"/>
        <end position="61"/>
    </location>
</feature>
<feature type="helix" evidence="2">
    <location>
        <begin position="65"/>
        <end position="81"/>
    </location>
</feature>
<feature type="turn" evidence="2">
    <location>
        <begin position="85"/>
        <end position="87"/>
    </location>
</feature>
<feature type="helix" evidence="2">
    <location>
        <begin position="89"/>
        <end position="94"/>
    </location>
</feature>
<feature type="helix" evidence="2">
    <location>
        <begin position="98"/>
        <end position="110"/>
    </location>
</feature>
<feature type="helix" evidence="2">
    <location>
        <begin position="114"/>
        <end position="131"/>
    </location>
</feature>
<feature type="helix" evidence="2">
    <location>
        <begin position="135"/>
        <end position="149"/>
    </location>
</feature>
<feature type="helix" evidence="2">
    <location>
        <begin position="150"/>
        <end position="154"/>
    </location>
</feature>
<feature type="helix" evidence="2">
    <location>
        <begin position="158"/>
        <end position="166"/>
    </location>
</feature>
<geneLocation type="plasmid">
    <name>lp54</name>
</geneLocation>
<evidence type="ECO:0000305" key="1"/>
<evidence type="ECO:0007829" key="2">
    <source>
        <dbReference type="PDB" id="6QS0"/>
    </source>
</evidence>
<keyword id="KW-0002">3D-structure</keyword>
<keyword id="KW-0998">Cell outer membrane</keyword>
<keyword id="KW-0472">Membrane</keyword>
<keyword id="KW-0614">Plasmid</keyword>
<keyword id="KW-1185">Reference proteome</keyword>
<name>Y2503_BORBU</name>
<gene>
    <name type="ordered locus">BB_A03</name>
</gene>